<comment type="function">
    <text evidence="2">PsaA and PsaB bind P700, the primary electron donor of photosystem I (PSI), as well as the electron acceptors A0, A1 and FX. PSI is a plastocyanin/cytochrome c6-ferredoxin oxidoreductase, converting photonic excitation into a charge separation, which transfers an electron from the donor P700 chlorophyll pair to the spectroscopically characterized acceptors A0, A1, FX, FA and FB in turn. Oxidized P700 is reduced on the lumenal side of the thylakoid membrane by plastocyanin or cytochrome c6.</text>
</comment>
<comment type="catalytic activity">
    <reaction evidence="2">
        <text>reduced [plastocyanin] + hnu + oxidized [2Fe-2S]-[ferredoxin] = oxidized [plastocyanin] + reduced [2Fe-2S]-[ferredoxin]</text>
        <dbReference type="Rhea" id="RHEA:30407"/>
        <dbReference type="Rhea" id="RHEA-COMP:10000"/>
        <dbReference type="Rhea" id="RHEA-COMP:10001"/>
        <dbReference type="Rhea" id="RHEA-COMP:10039"/>
        <dbReference type="Rhea" id="RHEA-COMP:10040"/>
        <dbReference type="ChEBI" id="CHEBI:29036"/>
        <dbReference type="ChEBI" id="CHEBI:30212"/>
        <dbReference type="ChEBI" id="CHEBI:33737"/>
        <dbReference type="ChEBI" id="CHEBI:33738"/>
        <dbReference type="ChEBI" id="CHEBI:49552"/>
        <dbReference type="EC" id="1.97.1.12"/>
    </reaction>
</comment>
<comment type="cofactor">
    <text evidence="1">PSI electron transfer chain: 5 divinyl chlorophyll a, 1 divinyl chlorophyll a', 2 phylloquinones and 3 4Fe-4S clusters. PSI core antenna: 90 divinyl chlorophyll a, 22 carotenoids, 3 phospholipids and 1 galactolipid. P700 is a divinyl chlorophyll a/divinyl chlorophyll a' dimer, A0 is one or more chlorophyll divinyl a, A1 is one or both phylloquinones and FX is a shared 4Fe-4S iron-sulfur center.</text>
</comment>
<comment type="subunit">
    <text evidence="2">The PsaA/B heterodimer binds the P700 chlorophyll special pair and subsequent electron acceptors. PSI consists of a core antenna complex that captures photons, and an electron transfer chain that converts photonic excitation into a charge separation. The cyanobacterial PSI reaction center is composed of one copy each of PsaA,B,C,D,E,F,I,J,K,L,M and X, and forms trimeric complexes.</text>
</comment>
<comment type="subcellular location">
    <subcellularLocation>
        <location evidence="2">Cellular thylakoid membrane</location>
        <topology evidence="2">Multi-pass membrane protein</topology>
    </subcellularLocation>
</comment>
<comment type="induction">
    <text evidence="3">Transcription decreases upon iron starvation.</text>
</comment>
<comment type="similarity">
    <text evidence="2">Belongs to the PsaA/PsaB family.</text>
</comment>
<gene>
    <name evidence="2" type="primary">psaA</name>
    <name type="ordered locus">PMT_1770</name>
</gene>
<reference key="1">
    <citation type="journal article" date="2003" name="Nature">
        <title>Genome divergence in two Prochlorococcus ecotypes reflects oceanic niche differentiation.</title>
        <authorList>
            <person name="Rocap G."/>
            <person name="Larimer F.W."/>
            <person name="Lamerdin J.E."/>
            <person name="Malfatti S."/>
            <person name="Chain P."/>
            <person name="Ahlgren N.A."/>
            <person name="Arellano A."/>
            <person name="Coleman M."/>
            <person name="Hauser L."/>
            <person name="Hess W.R."/>
            <person name="Johnson Z.I."/>
            <person name="Land M.L."/>
            <person name="Lindell D."/>
            <person name="Post A.F."/>
            <person name="Regala W."/>
            <person name="Shah M."/>
            <person name="Shaw S.L."/>
            <person name="Steglich C."/>
            <person name="Sullivan M.B."/>
            <person name="Ting C.S."/>
            <person name="Tolonen A."/>
            <person name="Webb E.A."/>
            <person name="Zinser E.R."/>
            <person name="Chisholm S.W."/>
        </authorList>
    </citation>
    <scope>NUCLEOTIDE SEQUENCE [LARGE SCALE GENOMIC DNA]</scope>
    <source>
        <strain>MIT 9313</strain>
    </source>
</reference>
<reference key="2">
    <citation type="journal article" date="2003" name="Nature">
        <title>Low-light-adapted Prochlorococcus species possess specific antennae for each photosystem.</title>
        <authorList>
            <person name="Bibby T.S."/>
            <person name="Mary I."/>
            <person name="Nield J."/>
            <person name="Partensky F."/>
            <person name="Barber J."/>
        </authorList>
    </citation>
    <scope>REPRESSION UNDER IRON-STARVATION</scope>
</reference>
<name>PSAA_PROMM</name>
<proteinExistence type="evidence at transcript level"/>
<sequence>MTISPPERGEKAKPIYDQPVDRDHVPADFEKFEQPGFFSKSLAKGPNSTTWIWNLHADAHDFDTHIGDLEETSRKIFSAHFGHLAIVFIWMSGAFFHGARFSNYSGWLADPTHVKASAQVVWPIVGQEIMNADMGAGFNGIQITSGIFQMWRAWGITSETELMALATGALIMAALVLHGGIFHYHKAAPKLEWFKKIESMLQHHQIGLFGLGSLGWTGHLIHVANPTNALLDAIDAGTPMVLDGKTIATAADIPLPHELYNADLVGQIYPGLASGVGNFFSANWWAFSDFLTNNGGVNPVTGALWSTDVAHHHLAWAVFLMFGGHVYRSRFGIGHSMKEIMGNVKGDPLLFPAPNGHKGLFEFLSNSWHAQLAVNLACIGSGSIVVAHHMYSLPPYPYLATDYPTVLGLFTHHMWIGGLMICGAAAHAGIAVIRDYDVSVHVDNVLDRMFKARDAIISHLNWVCMFLGFHSFGLYIHNDSMRALGRSQDMFSDSAIQLQPVLAQWIQSLWASSIGTSAVVGTTTGLPGAVSDVFNGSVVAVGGKVALMAIPLGTADLMIHHIHAFTIHVTCLILLKGVLFARSSRLVPDKANLGFRFSCDGPGRGGTCQVSSWDHVFLGLFWMYNSLSMVIFYFSWKMQSDVWGTVNSDGSVTHLVSGNFAQSAITVNGWFRDFLWAQSSQVLTSYGTGLSGYGLLFLGGHFVWAFSLMFLFSGRGYWQELFESIIWAHNKLKLAPTIQPRALSITQGRAVGVTHFLFGGIVTTWAFFHARLLGLG</sequence>
<organism>
    <name type="scientific">Prochlorococcus marinus (strain MIT 9313)</name>
    <dbReference type="NCBI Taxonomy" id="74547"/>
    <lineage>
        <taxon>Bacteria</taxon>
        <taxon>Bacillati</taxon>
        <taxon>Cyanobacteriota</taxon>
        <taxon>Cyanophyceae</taxon>
        <taxon>Synechococcales</taxon>
        <taxon>Prochlorococcaceae</taxon>
        <taxon>Prochlorococcus</taxon>
    </lineage>
</organism>
<feature type="chain" id="PRO_0000088589" description="Photosystem I P700 chlorophyll a apoprotein A1">
    <location>
        <begin position="1"/>
        <end position="776"/>
    </location>
</feature>
<feature type="transmembrane region" description="Helical; Name=I" evidence="2">
    <location>
        <begin position="76"/>
        <end position="99"/>
    </location>
</feature>
<feature type="transmembrane region" description="Helical; Name=II" evidence="2">
    <location>
        <begin position="162"/>
        <end position="185"/>
    </location>
</feature>
<feature type="transmembrane region" description="Helical; Name=III" evidence="2">
    <location>
        <begin position="201"/>
        <end position="225"/>
    </location>
</feature>
<feature type="transmembrane region" description="Helical; Name=IV" evidence="2">
    <location>
        <begin position="309"/>
        <end position="327"/>
    </location>
</feature>
<feature type="transmembrane region" description="Helical; Name=V" evidence="2">
    <location>
        <begin position="368"/>
        <end position="391"/>
    </location>
</feature>
<feature type="transmembrane region" description="Helical; Name=VI" evidence="2">
    <location>
        <begin position="407"/>
        <end position="433"/>
    </location>
</feature>
<feature type="transmembrane region" description="Helical; Name=VII" evidence="2">
    <location>
        <begin position="455"/>
        <end position="477"/>
    </location>
</feature>
<feature type="transmembrane region" description="Helical; Name=VIII" evidence="2">
    <location>
        <begin position="557"/>
        <end position="575"/>
    </location>
</feature>
<feature type="transmembrane region" description="Helical; Name=IX" evidence="2">
    <location>
        <begin position="615"/>
        <end position="636"/>
    </location>
</feature>
<feature type="transmembrane region" description="Helical; Name=X" evidence="2">
    <location>
        <begin position="690"/>
        <end position="712"/>
    </location>
</feature>
<feature type="transmembrane region" description="Helical; Name=XI" evidence="2">
    <location>
        <begin position="750"/>
        <end position="770"/>
    </location>
</feature>
<feature type="binding site" evidence="2">
    <location>
        <position position="599"/>
    </location>
    <ligand>
        <name>[4Fe-4S] cluster</name>
        <dbReference type="ChEBI" id="CHEBI:49883"/>
        <note>ligand shared between dimeric partners</note>
    </ligand>
</feature>
<feature type="binding site" evidence="2">
    <location>
        <position position="608"/>
    </location>
    <ligand>
        <name>[4Fe-4S] cluster</name>
        <dbReference type="ChEBI" id="CHEBI:49883"/>
        <note>ligand shared between dimeric partners</note>
    </ligand>
</feature>
<feature type="binding site" description="axial binding residue" evidence="2">
    <location>
        <position position="701"/>
    </location>
    <ligand>
        <name>divinylchlorophyll a'</name>
        <dbReference type="ChEBI" id="CHEBI:189420"/>
        <label>A1</label>
    </ligand>
    <ligandPart>
        <name>Mg</name>
        <dbReference type="ChEBI" id="CHEBI:25107"/>
    </ligandPart>
</feature>
<feature type="binding site" description="axial binding residue" evidence="2">
    <location>
        <position position="709"/>
    </location>
    <ligand>
        <name>divinyl chlorophyll a</name>
        <dbReference type="ChEBI" id="CHEBI:73095"/>
        <label>A3</label>
    </ligand>
    <ligandPart>
        <name>Mg</name>
        <dbReference type="ChEBI" id="CHEBI:25107"/>
    </ligandPart>
</feature>
<feature type="binding site" evidence="2">
    <location>
        <position position="717"/>
    </location>
    <ligand>
        <name>divinyl chlorophyll a</name>
        <dbReference type="ChEBI" id="CHEBI:73095"/>
        <label>A3</label>
    </ligand>
</feature>
<feature type="binding site" evidence="2">
    <location>
        <position position="718"/>
    </location>
    <ligand>
        <name>phylloquinone</name>
        <dbReference type="ChEBI" id="CHEBI:18067"/>
        <label>A</label>
    </ligand>
</feature>
<evidence type="ECO:0000250" key="1"/>
<evidence type="ECO:0000255" key="2">
    <source>
        <dbReference type="HAMAP-Rule" id="MF_00458"/>
    </source>
</evidence>
<evidence type="ECO:0000269" key="3">
    <source>
    </source>
</evidence>
<keyword id="KW-0004">4Fe-4S</keyword>
<keyword id="KW-0148">Chlorophyll</keyword>
<keyword id="KW-0157">Chromophore</keyword>
<keyword id="KW-0249">Electron transport</keyword>
<keyword id="KW-0408">Iron</keyword>
<keyword id="KW-0411">Iron-sulfur</keyword>
<keyword id="KW-0460">Magnesium</keyword>
<keyword id="KW-0472">Membrane</keyword>
<keyword id="KW-0479">Metal-binding</keyword>
<keyword id="KW-0560">Oxidoreductase</keyword>
<keyword id="KW-0602">Photosynthesis</keyword>
<keyword id="KW-0603">Photosystem I</keyword>
<keyword id="KW-1185">Reference proteome</keyword>
<keyword id="KW-0793">Thylakoid</keyword>
<keyword id="KW-0812">Transmembrane</keyword>
<keyword id="KW-1133">Transmembrane helix</keyword>
<keyword id="KW-0813">Transport</keyword>
<dbReference type="EC" id="1.97.1.12" evidence="2"/>
<dbReference type="EMBL" id="BX548175">
    <property type="protein sequence ID" value="CAE21945.1"/>
    <property type="molecule type" value="Genomic_DNA"/>
</dbReference>
<dbReference type="RefSeq" id="WP_011131137.1">
    <property type="nucleotide sequence ID" value="NC_005071.1"/>
</dbReference>
<dbReference type="SMR" id="Q7V510"/>
<dbReference type="KEGG" id="pmt:PMT_1770"/>
<dbReference type="eggNOG" id="COG2885">
    <property type="taxonomic scope" value="Bacteria"/>
</dbReference>
<dbReference type="HOGENOM" id="CLU_016126_1_0_3"/>
<dbReference type="OrthoDB" id="499313at2"/>
<dbReference type="Proteomes" id="UP000001423">
    <property type="component" value="Chromosome"/>
</dbReference>
<dbReference type="GO" id="GO:0009522">
    <property type="term" value="C:photosystem I"/>
    <property type="evidence" value="ECO:0007669"/>
    <property type="project" value="UniProtKB-KW"/>
</dbReference>
<dbReference type="GO" id="GO:0031676">
    <property type="term" value="C:plasma membrane-derived thylakoid membrane"/>
    <property type="evidence" value="ECO:0007669"/>
    <property type="project" value="UniProtKB-SubCell"/>
</dbReference>
<dbReference type="GO" id="GO:0051539">
    <property type="term" value="F:4 iron, 4 sulfur cluster binding"/>
    <property type="evidence" value="ECO:0007669"/>
    <property type="project" value="UniProtKB-KW"/>
</dbReference>
<dbReference type="GO" id="GO:0016168">
    <property type="term" value="F:chlorophyll binding"/>
    <property type="evidence" value="ECO:0007669"/>
    <property type="project" value="UniProtKB-KW"/>
</dbReference>
<dbReference type="GO" id="GO:0009055">
    <property type="term" value="F:electron transfer activity"/>
    <property type="evidence" value="ECO:0007669"/>
    <property type="project" value="UniProtKB-UniRule"/>
</dbReference>
<dbReference type="GO" id="GO:0000287">
    <property type="term" value="F:magnesium ion binding"/>
    <property type="evidence" value="ECO:0007669"/>
    <property type="project" value="UniProtKB-UniRule"/>
</dbReference>
<dbReference type="GO" id="GO:0016491">
    <property type="term" value="F:oxidoreductase activity"/>
    <property type="evidence" value="ECO:0007669"/>
    <property type="project" value="UniProtKB-KW"/>
</dbReference>
<dbReference type="GO" id="GO:0015979">
    <property type="term" value="P:photosynthesis"/>
    <property type="evidence" value="ECO:0007669"/>
    <property type="project" value="UniProtKB-UniRule"/>
</dbReference>
<dbReference type="Gene3D" id="1.20.1130.10">
    <property type="entry name" value="Photosystem I PsaA/PsaB"/>
    <property type="match status" value="1"/>
</dbReference>
<dbReference type="HAMAP" id="MF_00458">
    <property type="entry name" value="PSI_PsaA"/>
    <property type="match status" value="1"/>
</dbReference>
<dbReference type="InterPro" id="IPR006243">
    <property type="entry name" value="PSI_PsaA"/>
</dbReference>
<dbReference type="InterPro" id="IPR001280">
    <property type="entry name" value="PSI_PsaA/B"/>
</dbReference>
<dbReference type="InterPro" id="IPR020586">
    <property type="entry name" value="PSI_PsaA/B_CS"/>
</dbReference>
<dbReference type="InterPro" id="IPR036408">
    <property type="entry name" value="PSI_PsaA/B_sf"/>
</dbReference>
<dbReference type="NCBIfam" id="TIGR01335">
    <property type="entry name" value="psaA"/>
    <property type="match status" value="1"/>
</dbReference>
<dbReference type="PANTHER" id="PTHR30128">
    <property type="entry name" value="OUTER MEMBRANE PROTEIN, OMPA-RELATED"/>
    <property type="match status" value="1"/>
</dbReference>
<dbReference type="PANTHER" id="PTHR30128:SF19">
    <property type="entry name" value="PHOTOSYSTEM I P700 CHLOROPHYLL A APOPROTEIN A1-RELATED"/>
    <property type="match status" value="1"/>
</dbReference>
<dbReference type="Pfam" id="PF00223">
    <property type="entry name" value="PsaA_PsaB"/>
    <property type="match status" value="1"/>
</dbReference>
<dbReference type="PIRSF" id="PIRSF002905">
    <property type="entry name" value="PSI_A"/>
    <property type="match status" value="1"/>
</dbReference>
<dbReference type="PRINTS" id="PR00257">
    <property type="entry name" value="PHOTSYSPSAAB"/>
</dbReference>
<dbReference type="SUPFAM" id="SSF81558">
    <property type="entry name" value="Photosystem I subunits PsaA/PsaB"/>
    <property type="match status" value="1"/>
</dbReference>
<dbReference type="PROSITE" id="PS00419">
    <property type="entry name" value="PHOTOSYSTEM_I_PSAAB"/>
    <property type="match status" value="1"/>
</dbReference>
<protein>
    <recommendedName>
        <fullName evidence="2">Photosystem I P700 chlorophyll a apoprotein A1</fullName>
        <ecNumber evidence="2">1.97.1.12</ecNumber>
    </recommendedName>
    <alternativeName>
        <fullName evidence="2">PsaA</fullName>
    </alternativeName>
</protein>
<accession>Q7V510</accession>